<protein>
    <recommendedName>
        <fullName>Prostatic glandular kallikrein-6</fullName>
        <ecNumber>3.4.21.35</ecNumber>
    </recommendedName>
    <alternativeName>
        <fullName>Glandular kallikrein-8</fullName>
        <shortName>rGK-8</shortName>
    </alternativeName>
    <alternativeName>
        <fullName>P1 kallikrein</fullName>
    </alternativeName>
    <alternativeName>
        <fullName>Tissue kallikrein</fullName>
    </alternativeName>
</protein>
<accession>P36374</accession>
<comment type="function">
    <text>Glandular kallikreins cleave Met-Lys and Arg-Ser bonds in kininogen to release Lys-bradykinin.</text>
</comment>
<comment type="catalytic activity">
    <reaction>
        <text>Preferential cleavage of Arg-|-Xaa bonds in small molecule substrates. Highly selective action to release kallidin (lysyl-bradykinin) from kininogen involves hydrolysis of Met-|-Xaa or Leu-|-Xaa.</text>
        <dbReference type="EC" id="3.4.21.35"/>
    </reaction>
</comment>
<comment type="similarity">
    <text evidence="2">Belongs to the peptidase S1 family. Kallikrein subfamily.</text>
</comment>
<gene>
    <name type="primary">Klk6</name>
    <name type="synonym">Klk-8</name>
    <name type="synonym">Klk8</name>
</gene>
<dbReference type="EC" id="3.4.21.35"/>
<dbReference type="EMBL" id="M27217">
    <property type="protein sequence ID" value="AAA42036.1"/>
    <property type="molecule type" value="Genomic_DNA"/>
</dbReference>
<dbReference type="EMBL" id="M27215">
    <property type="protein sequence ID" value="AAA42036.1"/>
    <property type="status" value="JOINED"/>
    <property type="molecule type" value="Genomic_DNA"/>
</dbReference>
<dbReference type="EMBL" id="M27216">
    <property type="protein sequence ID" value="AAA42036.1"/>
    <property type="status" value="JOINED"/>
    <property type="molecule type" value="Genomic_DNA"/>
</dbReference>
<dbReference type="PIR" id="A34079">
    <property type="entry name" value="A34079"/>
</dbReference>
<dbReference type="SMR" id="P36374"/>
<dbReference type="FunCoup" id="P36374">
    <property type="interactions" value="24"/>
</dbReference>
<dbReference type="STRING" id="10116.ENSRNOP00000066639"/>
<dbReference type="MEROPS" id="S01.288"/>
<dbReference type="GlyCosmos" id="P36374">
    <property type="glycosylation" value="1 site, No reported glycans"/>
</dbReference>
<dbReference type="GlyGen" id="P36374">
    <property type="glycosylation" value="1 site"/>
</dbReference>
<dbReference type="PhosphoSitePlus" id="P36374"/>
<dbReference type="PaxDb" id="10116-ENSRNOP00000066639"/>
<dbReference type="UCSC" id="RGD:1305359">
    <property type="organism name" value="rat"/>
</dbReference>
<dbReference type="AGR" id="RGD:1305359"/>
<dbReference type="RGD" id="1305359">
    <property type="gene designation" value="Klk6"/>
</dbReference>
<dbReference type="eggNOG" id="KOG3627">
    <property type="taxonomic scope" value="Eukaryota"/>
</dbReference>
<dbReference type="InParanoid" id="P36374"/>
<dbReference type="PhylomeDB" id="P36374"/>
<dbReference type="BRENDA" id="3.4.21.118">
    <property type="organism ID" value="5301"/>
</dbReference>
<dbReference type="Reactome" id="R-RNO-1592389">
    <property type="pathway name" value="Activation of Matrix Metalloproteinases"/>
</dbReference>
<dbReference type="Reactome" id="R-RNO-381426">
    <property type="pathway name" value="Regulation of Insulin-like Growth Factor (IGF) transport and uptake by Insulin-like Growth Factor Binding Proteins (IGFBPs)"/>
</dbReference>
<dbReference type="PRO" id="PR:P36374"/>
<dbReference type="Proteomes" id="UP000002494">
    <property type="component" value="Unplaced"/>
</dbReference>
<dbReference type="GO" id="GO:0005615">
    <property type="term" value="C:extracellular space"/>
    <property type="evidence" value="ECO:0000318"/>
    <property type="project" value="GO_Central"/>
</dbReference>
<dbReference type="GO" id="GO:0030141">
    <property type="term" value="C:secretory granule"/>
    <property type="evidence" value="ECO:0000318"/>
    <property type="project" value="GO_Central"/>
</dbReference>
<dbReference type="GO" id="GO:0004252">
    <property type="term" value="F:serine-type endopeptidase activity"/>
    <property type="evidence" value="ECO:0000318"/>
    <property type="project" value="GO_Central"/>
</dbReference>
<dbReference type="GO" id="GO:0003073">
    <property type="term" value="P:regulation of systemic arterial blood pressure"/>
    <property type="evidence" value="ECO:0000318"/>
    <property type="project" value="GO_Central"/>
</dbReference>
<dbReference type="GO" id="GO:0031638">
    <property type="term" value="P:zymogen activation"/>
    <property type="evidence" value="ECO:0000318"/>
    <property type="project" value="GO_Central"/>
</dbReference>
<dbReference type="CDD" id="cd00190">
    <property type="entry name" value="Tryp_SPc"/>
    <property type="match status" value="1"/>
</dbReference>
<dbReference type="FunFam" id="2.40.10.10:FF:000032">
    <property type="entry name" value="Kallikrein 1-related peptidase C9"/>
    <property type="match status" value="1"/>
</dbReference>
<dbReference type="FunFam" id="2.40.10.10:FF:000042">
    <property type="entry name" value="Kallikrein 1-related peptidase C9"/>
    <property type="match status" value="1"/>
</dbReference>
<dbReference type="Gene3D" id="2.40.10.10">
    <property type="entry name" value="Trypsin-like serine proteases"/>
    <property type="match status" value="2"/>
</dbReference>
<dbReference type="InterPro" id="IPR009003">
    <property type="entry name" value="Peptidase_S1_PA"/>
</dbReference>
<dbReference type="InterPro" id="IPR043504">
    <property type="entry name" value="Peptidase_S1_PA_chymotrypsin"/>
</dbReference>
<dbReference type="InterPro" id="IPR001314">
    <property type="entry name" value="Peptidase_S1A"/>
</dbReference>
<dbReference type="InterPro" id="IPR001254">
    <property type="entry name" value="Trypsin_dom"/>
</dbReference>
<dbReference type="InterPro" id="IPR018114">
    <property type="entry name" value="TRYPSIN_HIS"/>
</dbReference>
<dbReference type="InterPro" id="IPR033116">
    <property type="entry name" value="TRYPSIN_SER"/>
</dbReference>
<dbReference type="PANTHER" id="PTHR24271:SF47">
    <property type="entry name" value="KALLIKREIN-1"/>
    <property type="match status" value="1"/>
</dbReference>
<dbReference type="PANTHER" id="PTHR24271">
    <property type="entry name" value="KALLIKREIN-RELATED"/>
    <property type="match status" value="1"/>
</dbReference>
<dbReference type="Pfam" id="PF00089">
    <property type="entry name" value="Trypsin"/>
    <property type="match status" value="1"/>
</dbReference>
<dbReference type="PRINTS" id="PR00722">
    <property type="entry name" value="CHYMOTRYPSIN"/>
</dbReference>
<dbReference type="SMART" id="SM00020">
    <property type="entry name" value="Tryp_SPc"/>
    <property type="match status" value="1"/>
</dbReference>
<dbReference type="SUPFAM" id="SSF50494">
    <property type="entry name" value="Trypsin-like serine proteases"/>
    <property type="match status" value="1"/>
</dbReference>
<dbReference type="PROSITE" id="PS50240">
    <property type="entry name" value="TRYPSIN_DOM"/>
    <property type="match status" value="1"/>
</dbReference>
<dbReference type="PROSITE" id="PS00134">
    <property type="entry name" value="TRYPSIN_HIS"/>
    <property type="match status" value="1"/>
</dbReference>
<dbReference type="PROSITE" id="PS00135">
    <property type="entry name" value="TRYPSIN_SER"/>
    <property type="match status" value="1"/>
</dbReference>
<reference key="1">
    <citation type="journal article" date="1989" name="Biochemistry">
        <title>Expression of two kallikrein gene family members in the rat prostate.</title>
        <authorList>
            <person name="Brady J.M."/>
            <person name="Wines D.R."/>
            <person name="MacDonald R.J."/>
        </authorList>
    </citation>
    <scope>NUCLEOTIDE SEQUENCE [GENOMIC DNA]</scope>
</reference>
<organism>
    <name type="scientific">Rattus norvegicus</name>
    <name type="common">Rat</name>
    <dbReference type="NCBI Taxonomy" id="10116"/>
    <lineage>
        <taxon>Eukaryota</taxon>
        <taxon>Metazoa</taxon>
        <taxon>Chordata</taxon>
        <taxon>Craniata</taxon>
        <taxon>Vertebrata</taxon>
        <taxon>Euteleostomi</taxon>
        <taxon>Mammalia</taxon>
        <taxon>Eutheria</taxon>
        <taxon>Euarchontoglires</taxon>
        <taxon>Glires</taxon>
        <taxon>Rodentia</taxon>
        <taxon>Myomorpha</taxon>
        <taxon>Muroidea</taxon>
        <taxon>Muridae</taxon>
        <taxon>Murinae</taxon>
        <taxon>Rattus</taxon>
    </lineage>
</organism>
<sequence length="261" mass="29013">MWLLILFLILSLGWNDAAPPGQSRIIGGFNCEKNSQPWQVAVYHFNEPQCGGVLIHPSWVITAAHCYSVNYQVWLGRNNLLEDEPFAQHRLVSQSFPHPGFNLDIIKNHTRKPGNDYSNDLMLLHLKTPADITDGVKVIDLPTEEPKVGSTCLTSGWGSITPLKWEFPDDLQCVNIHLLSNEKCIKAYNDEVTDVMLCAGEMDGGKDICKGDSGGPLICDGVLQGITSWGSMPCGEPNKPSVYTKLIKFTSWMKKVMKENP</sequence>
<evidence type="ECO:0000255" key="1"/>
<evidence type="ECO:0000255" key="2">
    <source>
        <dbReference type="PROSITE-ProRule" id="PRU00274"/>
    </source>
</evidence>
<evidence type="ECO:0000305" key="3"/>
<proteinExistence type="inferred from homology"/>
<feature type="signal peptide" evidence="3">
    <location>
        <begin position="1"/>
        <end position="18"/>
    </location>
</feature>
<feature type="propeptide" id="PRO_0000028007" description="Activation peptide" evidence="3">
    <location>
        <begin position="19"/>
        <end position="24"/>
    </location>
</feature>
<feature type="chain" id="PRO_0000028008" description="Prostatic glandular kallikrein-6">
    <location>
        <begin position="25"/>
        <end position="261"/>
    </location>
</feature>
<feature type="domain" description="Peptidase S1" evidence="2">
    <location>
        <begin position="25"/>
        <end position="258"/>
    </location>
</feature>
<feature type="active site" description="Charge relay system">
    <location>
        <position position="65"/>
    </location>
</feature>
<feature type="active site" description="Charge relay system">
    <location>
        <position position="120"/>
    </location>
</feature>
<feature type="active site" description="Charge relay system">
    <location>
        <position position="213"/>
    </location>
</feature>
<feature type="glycosylation site" description="N-linked (GlcNAc...) asparagine" evidence="1">
    <location>
        <position position="108"/>
    </location>
</feature>
<feature type="disulfide bond" evidence="2">
    <location>
        <begin position="31"/>
        <end position="173"/>
    </location>
</feature>
<feature type="disulfide bond" evidence="2">
    <location>
        <begin position="50"/>
        <end position="66"/>
    </location>
</feature>
<feature type="disulfide bond" evidence="2">
    <location>
        <begin position="152"/>
        <end position="219"/>
    </location>
</feature>
<feature type="disulfide bond" evidence="2">
    <location>
        <begin position="184"/>
        <end position="198"/>
    </location>
</feature>
<feature type="disulfide bond" evidence="2">
    <location>
        <begin position="209"/>
        <end position="234"/>
    </location>
</feature>
<name>KLK6_RAT</name>
<keyword id="KW-1015">Disulfide bond</keyword>
<keyword id="KW-0325">Glycoprotein</keyword>
<keyword id="KW-0378">Hydrolase</keyword>
<keyword id="KW-0645">Protease</keyword>
<keyword id="KW-1185">Reference proteome</keyword>
<keyword id="KW-0720">Serine protease</keyword>
<keyword id="KW-0732">Signal</keyword>
<keyword id="KW-0865">Zymogen</keyword>